<name>RS5_GRABC</name>
<keyword id="KW-1185">Reference proteome</keyword>
<keyword id="KW-0687">Ribonucleoprotein</keyword>
<keyword id="KW-0689">Ribosomal protein</keyword>
<keyword id="KW-0694">RNA-binding</keyword>
<keyword id="KW-0699">rRNA-binding</keyword>
<gene>
    <name evidence="1" type="primary">rpsE</name>
    <name type="ordered locus">GbCGDNIH1_0571</name>
</gene>
<dbReference type="EMBL" id="CP000394">
    <property type="protein sequence ID" value="ABI61469.1"/>
    <property type="molecule type" value="Genomic_DNA"/>
</dbReference>
<dbReference type="RefSeq" id="WP_011631278.1">
    <property type="nucleotide sequence ID" value="NC_008343.2"/>
</dbReference>
<dbReference type="SMR" id="Q0BUN3"/>
<dbReference type="STRING" id="391165.GbCGDNIH1_0571"/>
<dbReference type="GeneID" id="69744824"/>
<dbReference type="KEGG" id="gbe:GbCGDNIH1_0571"/>
<dbReference type="eggNOG" id="COG0098">
    <property type="taxonomic scope" value="Bacteria"/>
</dbReference>
<dbReference type="HOGENOM" id="CLU_065898_2_2_5"/>
<dbReference type="OrthoDB" id="9809045at2"/>
<dbReference type="Proteomes" id="UP000001963">
    <property type="component" value="Chromosome"/>
</dbReference>
<dbReference type="GO" id="GO:0015935">
    <property type="term" value="C:small ribosomal subunit"/>
    <property type="evidence" value="ECO:0007669"/>
    <property type="project" value="InterPro"/>
</dbReference>
<dbReference type="GO" id="GO:0019843">
    <property type="term" value="F:rRNA binding"/>
    <property type="evidence" value="ECO:0007669"/>
    <property type="project" value="UniProtKB-UniRule"/>
</dbReference>
<dbReference type="GO" id="GO:0003735">
    <property type="term" value="F:structural constituent of ribosome"/>
    <property type="evidence" value="ECO:0007669"/>
    <property type="project" value="InterPro"/>
</dbReference>
<dbReference type="GO" id="GO:0006412">
    <property type="term" value="P:translation"/>
    <property type="evidence" value="ECO:0007669"/>
    <property type="project" value="UniProtKB-UniRule"/>
</dbReference>
<dbReference type="FunFam" id="3.30.160.20:FF:000001">
    <property type="entry name" value="30S ribosomal protein S5"/>
    <property type="match status" value="1"/>
</dbReference>
<dbReference type="FunFam" id="3.30.230.10:FF:000002">
    <property type="entry name" value="30S ribosomal protein S5"/>
    <property type="match status" value="1"/>
</dbReference>
<dbReference type="Gene3D" id="3.30.160.20">
    <property type="match status" value="1"/>
</dbReference>
<dbReference type="Gene3D" id="3.30.230.10">
    <property type="match status" value="1"/>
</dbReference>
<dbReference type="HAMAP" id="MF_01307_B">
    <property type="entry name" value="Ribosomal_uS5_B"/>
    <property type="match status" value="1"/>
</dbReference>
<dbReference type="InterPro" id="IPR020568">
    <property type="entry name" value="Ribosomal_Su5_D2-typ_SF"/>
</dbReference>
<dbReference type="InterPro" id="IPR000851">
    <property type="entry name" value="Ribosomal_uS5"/>
</dbReference>
<dbReference type="InterPro" id="IPR005712">
    <property type="entry name" value="Ribosomal_uS5_bac-type"/>
</dbReference>
<dbReference type="InterPro" id="IPR005324">
    <property type="entry name" value="Ribosomal_uS5_C"/>
</dbReference>
<dbReference type="InterPro" id="IPR013810">
    <property type="entry name" value="Ribosomal_uS5_N"/>
</dbReference>
<dbReference type="InterPro" id="IPR018192">
    <property type="entry name" value="Ribosomal_uS5_N_CS"/>
</dbReference>
<dbReference type="InterPro" id="IPR014721">
    <property type="entry name" value="Ribsml_uS5_D2-typ_fold_subgr"/>
</dbReference>
<dbReference type="NCBIfam" id="TIGR01021">
    <property type="entry name" value="rpsE_bact"/>
    <property type="match status" value="1"/>
</dbReference>
<dbReference type="PANTHER" id="PTHR48277">
    <property type="entry name" value="MITOCHONDRIAL RIBOSOMAL PROTEIN S5"/>
    <property type="match status" value="1"/>
</dbReference>
<dbReference type="PANTHER" id="PTHR48277:SF1">
    <property type="entry name" value="MITOCHONDRIAL RIBOSOMAL PROTEIN S5"/>
    <property type="match status" value="1"/>
</dbReference>
<dbReference type="Pfam" id="PF00333">
    <property type="entry name" value="Ribosomal_S5"/>
    <property type="match status" value="1"/>
</dbReference>
<dbReference type="Pfam" id="PF03719">
    <property type="entry name" value="Ribosomal_S5_C"/>
    <property type="match status" value="1"/>
</dbReference>
<dbReference type="SUPFAM" id="SSF54768">
    <property type="entry name" value="dsRNA-binding domain-like"/>
    <property type="match status" value="1"/>
</dbReference>
<dbReference type="SUPFAM" id="SSF54211">
    <property type="entry name" value="Ribosomal protein S5 domain 2-like"/>
    <property type="match status" value="1"/>
</dbReference>
<dbReference type="PROSITE" id="PS00585">
    <property type="entry name" value="RIBOSOMAL_S5"/>
    <property type="match status" value="1"/>
</dbReference>
<dbReference type="PROSITE" id="PS50881">
    <property type="entry name" value="S5_DSRBD"/>
    <property type="match status" value="1"/>
</dbReference>
<organism>
    <name type="scientific">Granulibacter bethesdensis (strain ATCC BAA-1260 / CGDNIH1)</name>
    <dbReference type="NCBI Taxonomy" id="391165"/>
    <lineage>
        <taxon>Bacteria</taxon>
        <taxon>Pseudomonadati</taxon>
        <taxon>Pseudomonadota</taxon>
        <taxon>Alphaproteobacteria</taxon>
        <taxon>Acetobacterales</taxon>
        <taxon>Acetobacteraceae</taxon>
        <taxon>Granulibacter</taxon>
    </lineage>
</organism>
<feature type="chain" id="PRO_0000323131" description="Small ribosomal subunit protein uS5">
    <location>
        <begin position="1"/>
        <end position="190"/>
    </location>
</feature>
<feature type="domain" description="S5 DRBM" evidence="1">
    <location>
        <begin position="19"/>
        <end position="82"/>
    </location>
</feature>
<feature type="region of interest" description="Disordered" evidence="2">
    <location>
        <begin position="161"/>
        <end position="190"/>
    </location>
</feature>
<feature type="compositionally biased region" description="Basic and acidic residues" evidence="2">
    <location>
        <begin position="169"/>
        <end position="179"/>
    </location>
</feature>
<evidence type="ECO:0000255" key="1">
    <source>
        <dbReference type="HAMAP-Rule" id="MF_01307"/>
    </source>
</evidence>
<evidence type="ECO:0000256" key="2">
    <source>
        <dbReference type="SAM" id="MobiDB-lite"/>
    </source>
</evidence>
<evidence type="ECO:0000305" key="3"/>
<sequence>MAREPREGRGGREREADDIIDKLVTINRVAKVVKGGRRFAFAALVVVGDQKGRVGYGAGKAREVPEAIRKATERAKRSMIRVPMKEGRTLHHDVYGHFGAGKVVLRSATAGTGIIAGGPMRAVFESLGIGDVVAKSLGSRNPHNMVKATFAALERCSSPRSVASRRGKKVSDILGRREPVAGQEGEEAHA</sequence>
<reference key="1">
    <citation type="journal article" date="2007" name="J. Bacteriol.">
        <title>Genome sequence analysis of the emerging human pathogenic acetic acid bacterium Granulibacter bethesdensis.</title>
        <authorList>
            <person name="Greenberg D.E."/>
            <person name="Porcella S.F."/>
            <person name="Zelazny A.M."/>
            <person name="Virtaneva K."/>
            <person name="Sturdevant D.E."/>
            <person name="Kupko J.J. III"/>
            <person name="Barbian K.D."/>
            <person name="Babar A."/>
            <person name="Dorward D.W."/>
            <person name="Holland S.M."/>
        </authorList>
    </citation>
    <scope>NUCLEOTIDE SEQUENCE [LARGE SCALE GENOMIC DNA]</scope>
    <source>
        <strain>ATCC BAA-1260 / CGDNIH1</strain>
    </source>
</reference>
<proteinExistence type="inferred from homology"/>
<accession>Q0BUN3</accession>
<protein>
    <recommendedName>
        <fullName evidence="1">Small ribosomal subunit protein uS5</fullName>
    </recommendedName>
    <alternativeName>
        <fullName evidence="3">30S ribosomal protein S5</fullName>
    </alternativeName>
</protein>
<comment type="function">
    <text evidence="1">With S4 and S12 plays an important role in translational accuracy.</text>
</comment>
<comment type="function">
    <text evidence="1">Located at the back of the 30S subunit body where it stabilizes the conformation of the head with respect to the body.</text>
</comment>
<comment type="subunit">
    <text evidence="1">Part of the 30S ribosomal subunit. Contacts proteins S4 and S8.</text>
</comment>
<comment type="domain">
    <text>The N-terminal domain interacts with the head of the 30S subunit; the C-terminal domain interacts with the body and contacts protein S4. The interaction surface between S4 and S5 is involved in control of translational fidelity.</text>
</comment>
<comment type="similarity">
    <text evidence="1">Belongs to the universal ribosomal protein uS5 family.</text>
</comment>